<comment type="function">
    <text evidence="1">Catalyzes the reduction of FMN to FMNH2 which is used to reduce pyrimidine by RutA via the Rut pathway.</text>
</comment>
<comment type="catalytic activity">
    <reaction evidence="1">
        <text>FMNH2 + NAD(+) = FMN + NADH + 2 H(+)</text>
        <dbReference type="Rhea" id="RHEA:21620"/>
        <dbReference type="ChEBI" id="CHEBI:15378"/>
        <dbReference type="ChEBI" id="CHEBI:57540"/>
        <dbReference type="ChEBI" id="CHEBI:57618"/>
        <dbReference type="ChEBI" id="CHEBI:57945"/>
        <dbReference type="ChEBI" id="CHEBI:58210"/>
        <dbReference type="EC" id="1.5.1.42"/>
    </reaction>
</comment>
<comment type="similarity">
    <text evidence="1">Belongs to the non-flavoprotein flavin reductase family. RutF subfamily.</text>
</comment>
<proteinExistence type="inferred from homology"/>
<accession>C5CN84</accession>
<organism>
    <name type="scientific">Variovorax paradoxus (strain S110)</name>
    <dbReference type="NCBI Taxonomy" id="543728"/>
    <lineage>
        <taxon>Bacteria</taxon>
        <taxon>Pseudomonadati</taxon>
        <taxon>Pseudomonadota</taxon>
        <taxon>Betaproteobacteria</taxon>
        <taxon>Burkholderiales</taxon>
        <taxon>Comamonadaceae</taxon>
        <taxon>Variovorax</taxon>
    </lineage>
</organism>
<protein>
    <recommendedName>
        <fullName evidence="1">FMN reductase (NADH) RutF</fullName>
        <ecNumber evidence="1">1.5.1.42</ecNumber>
    </recommendedName>
    <alternativeName>
        <fullName evidence="1">FMN reductase</fullName>
    </alternativeName>
    <alternativeName>
        <fullName evidence="1">NADH-flavin reductase RutF</fullName>
    </alternativeName>
    <alternativeName>
        <fullName evidence="1">NADH:flavin oxidoreductase</fullName>
    </alternativeName>
</protein>
<dbReference type="EC" id="1.5.1.42" evidence="1"/>
<dbReference type="EMBL" id="CP001635">
    <property type="protein sequence ID" value="ACS21447.1"/>
    <property type="molecule type" value="Genomic_DNA"/>
</dbReference>
<dbReference type="SMR" id="C5CN84"/>
<dbReference type="STRING" id="543728.Vapar_4843"/>
<dbReference type="KEGG" id="vap:Vapar_4843"/>
<dbReference type="eggNOG" id="COG1853">
    <property type="taxonomic scope" value="Bacteria"/>
</dbReference>
<dbReference type="HOGENOM" id="CLU_059021_2_2_4"/>
<dbReference type="OrthoDB" id="8525727at2"/>
<dbReference type="GO" id="GO:0010181">
    <property type="term" value="F:FMN binding"/>
    <property type="evidence" value="ECO:0007669"/>
    <property type="project" value="InterPro"/>
</dbReference>
<dbReference type="GO" id="GO:0052874">
    <property type="term" value="F:FMN reductase (NADH) activity"/>
    <property type="evidence" value="ECO:0007669"/>
    <property type="project" value="UniProtKB-EC"/>
</dbReference>
<dbReference type="GO" id="GO:0008752">
    <property type="term" value="F:FMN reductase [NAD(P)H] activity"/>
    <property type="evidence" value="ECO:0007669"/>
    <property type="project" value="InterPro"/>
</dbReference>
<dbReference type="GO" id="GO:0042602">
    <property type="term" value="F:riboflavin reductase (NADPH) activity"/>
    <property type="evidence" value="ECO:0007669"/>
    <property type="project" value="UniProtKB-UniRule"/>
</dbReference>
<dbReference type="GO" id="GO:0019740">
    <property type="term" value="P:nitrogen utilization"/>
    <property type="evidence" value="ECO:0007669"/>
    <property type="project" value="UniProtKB-UniRule"/>
</dbReference>
<dbReference type="GO" id="GO:0006212">
    <property type="term" value="P:uracil catabolic process"/>
    <property type="evidence" value="ECO:0007669"/>
    <property type="project" value="UniProtKB-UniRule"/>
</dbReference>
<dbReference type="Gene3D" id="2.30.110.10">
    <property type="entry name" value="Electron Transport, Fmn-binding Protein, Chain A"/>
    <property type="match status" value="1"/>
</dbReference>
<dbReference type="HAMAP" id="MF_00833">
    <property type="entry name" value="RutF"/>
    <property type="match status" value="1"/>
</dbReference>
<dbReference type="InterPro" id="IPR002563">
    <property type="entry name" value="Flavin_Rdtase-like_dom"/>
</dbReference>
<dbReference type="InterPro" id="IPR050268">
    <property type="entry name" value="NADH-dep_flavin_reductase"/>
</dbReference>
<dbReference type="InterPro" id="IPR019917">
    <property type="entry name" value="RutF"/>
</dbReference>
<dbReference type="InterPro" id="IPR012349">
    <property type="entry name" value="Split_barrel_FMN-bd"/>
</dbReference>
<dbReference type="NCBIfam" id="TIGR03615">
    <property type="entry name" value="RutF"/>
    <property type="match status" value="1"/>
</dbReference>
<dbReference type="PANTHER" id="PTHR30466">
    <property type="entry name" value="FLAVIN REDUCTASE"/>
    <property type="match status" value="1"/>
</dbReference>
<dbReference type="PANTHER" id="PTHR30466:SF1">
    <property type="entry name" value="FMN REDUCTASE (NADH) RUTF"/>
    <property type="match status" value="1"/>
</dbReference>
<dbReference type="Pfam" id="PF01613">
    <property type="entry name" value="Flavin_Reduct"/>
    <property type="match status" value="1"/>
</dbReference>
<dbReference type="SMART" id="SM00903">
    <property type="entry name" value="Flavin_Reduct"/>
    <property type="match status" value="1"/>
</dbReference>
<dbReference type="SUPFAM" id="SSF50475">
    <property type="entry name" value="FMN-binding split barrel"/>
    <property type="match status" value="1"/>
</dbReference>
<gene>
    <name evidence="1" type="primary">rutF</name>
    <name type="ordered locus">Vapar_4843</name>
</gene>
<evidence type="ECO:0000255" key="1">
    <source>
        <dbReference type="HAMAP-Rule" id="MF_00833"/>
    </source>
</evidence>
<name>RUTF_VARPS</name>
<reference key="1">
    <citation type="journal article" date="2011" name="J. Bacteriol.">
        <title>Complete genome sequence of the metabolically versatile plant growth-promoting endophyte, Variovorax paradoxus S110.</title>
        <authorList>
            <person name="Han J.I."/>
            <person name="Choi H.K."/>
            <person name="Lee S.W."/>
            <person name="Orwin P.M."/>
            <person name="Kim J."/>
            <person name="Laroe S.L."/>
            <person name="Kim T.G."/>
            <person name="O'Neil J."/>
            <person name="Leadbetter J.R."/>
            <person name="Lee S.Y."/>
            <person name="Hur C.G."/>
            <person name="Spain J.C."/>
            <person name="Ovchinnikova G."/>
            <person name="Goodwin L."/>
            <person name="Han C."/>
        </authorList>
    </citation>
    <scope>NUCLEOTIDE SEQUENCE [LARGE SCALE GENOMIC DNA]</scope>
    <source>
        <strain>S110</strain>
    </source>
</reference>
<feature type="chain" id="PRO_0000403049" description="FMN reductase (NADH) RutF">
    <location>
        <begin position="1"/>
        <end position="180"/>
    </location>
</feature>
<keyword id="KW-0285">Flavoprotein</keyword>
<keyword id="KW-0288">FMN</keyword>
<keyword id="KW-0520">NAD</keyword>
<keyword id="KW-0560">Oxidoreductase</keyword>
<sequence length="180" mass="18641">MLPNAMASNHVMPSGAPPVLPKADYRNAMARLGAAVNIITTDGPAGRAGFTASAVCSVTDEPPMLLVCLNRSASVYPAFTANGVLCVNVLAAGHQALSGLFGGKTPMDERFAAGRWSRKATGSPVLEDAAASFDCRVVQATSAGTHDVLFCEALAIAIGGAAQSLIYFDRRYHEIAAPPH</sequence>